<dbReference type="EMBL" id="AL138647">
    <property type="protein sequence ID" value="CAB75813.1"/>
    <property type="molecule type" value="Genomic_DNA"/>
</dbReference>
<dbReference type="EMBL" id="CP002686">
    <property type="protein sequence ID" value="AEE79987.1"/>
    <property type="molecule type" value="Genomic_DNA"/>
</dbReference>
<dbReference type="EMBL" id="AY074382">
    <property type="protein sequence ID" value="AAL67078.1"/>
    <property type="molecule type" value="mRNA"/>
</dbReference>
<dbReference type="EMBL" id="AY081325">
    <property type="protein sequence ID" value="AAL91214.1"/>
    <property type="molecule type" value="mRNA"/>
</dbReference>
<dbReference type="EMBL" id="AY091240">
    <property type="protein sequence ID" value="AAM14179.1"/>
    <property type="molecule type" value="mRNA"/>
</dbReference>
<dbReference type="EMBL" id="AY088575">
    <property type="protein sequence ID" value="AAM66106.1"/>
    <property type="molecule type" value="mRNA"/>
</dbReference>
<dbReference type="PIR" id="T47818">
    <property type="entry name" value="T47818"/>
</dbReference>
<dbReference type="RefSeq" id="NP_191553.1">
    <property type="nucleotide sequence ID" value="NM_115857.2"/>
</dbReference>
<dbReference type="SMR" id="Q9M1Y1"/>
<dbReference type="BioGRID" id="10478">
    <property type="interactions" value="7"/>
</dbReference>
<dbReference type="FunCoup" id="Q9M1Y1">
    <property type="interactions" value="14"/>
</dbReference>
<dbReference type="IntAct" id="Q9M1Y1">
    <property type="interactions" value="4"/>
</dbReference>
<dbReference type="STRING" id="3702.Q9M1Y1"/>
<dbReference type="PaxDb" id="3702-AT3G59940.1"/>
<dbReference type="EnsemblPlants" id="AT3G59940.1">
    <property type="protein sequence ID" value="AT3G59940.1"/>
    <property type="gene ID" value="AT3G59940"/>
</dbReference>
<dbReference type="GeneID" id="825164"/>
<dbReference type="Gramene" id="AT3G59940.1">
    <property type="protein sequence ID" value="AT3G59940.1"/>
    <property type="gene ID" value="AT3G59940"/>
</dbReference>
<dbReference type="KEGG" id="ath:AT3G59940"/>
<dbReference type="Araport" id="AT3G59940"/>
<dbReference type="TAIR" id="AT3G59940">
    <property type="gene designation" value="KMD4"/>
</dbReference>
<dbReference type="eggNOG" id="KOG1072">
    <property type="taxonomic scope" value="Eukaryota"/>
</dbReference>
<dbReference type="HOGENOM" id="CLU_028510_1_0_1"/>
<dbReference type="InParanoid" id="Q9M1Y1"/>
<dbReference type="OMA" id="WCFIDSE"/>
<dbReference type="PhylomeDB" id="Q9M1Y1"/>
<dbReference type="UniPathway" id="UPA00143"/>
<dbReference type="PRO" id="PR:Q9M1Y1"/>
<dbReference type="Proteomes" id="UP000006548">
    <property type="component" value="Chromosome 3"/>
</dbReference>
<dbReference type="ExpressionAtlas" id="Q9M1Y1">
    <property type="expression patterns" value="baseline and differential"/>
</dbReference>
<dbReference type="GO" id="GO:0005829">
    <property type="term" value="C:cytosol"/>
    <property type="evidence" value="ECO:0000314"/>
    <property type="project" value="TAIR"/>
</dbReference>
<dbReference type="GO" id="GO:0005634">
    <property type="term" value="C:nucleus"/>
    <property type="evidence" value="ECO:0007669"/>
    <property type="project" value="UniProtKB-SubCell"/>
</dbReference>
<dbReference type="GO" id="GO:0080037">
    <property type="term" value="P:negative regulation of cytokinin-activated signaling pathway"/>
    <property type="evidence" value="ECO:0000316"/>
    <property type="project" value="TAIR"/>
</dbReference>
<dbReference type="GO" id="GO:0016567">
    <property type="term" value="P:protein ubiquitination"/>
    <property type="evidence" value="ECO:0007669"/>
    <property type="project" value="UniProtKB-UniPathway"/>
</dbReference>
<dbReference type="GO" id="GO:2000762">
    <property type="term" value="P:regulation of phenylpropanoid metabolic process"/>
    <property type="evidence" value="ECO:0000316"/>
    <property type="project" value="TAIR"/>
</dbReference>
<dbReference type="CDD" id="cd22152">
    <property type="entry name" value="F-box_AtAFR-like"/>
    <property type="match status" value="1"/>
</dbReference>
<dbReference type="FunFam" id="2.120.10.80:FF:000199">
    <property type="entry name" value="F-box/kelch-repeat protein SKIP20"/>
    <property type="match status" value="1"/>
</dbReference>
<dbReference type="Gene3D" id="1.20.1280.50">
    <property type="match status" value="1"/>
</dbReference>
<dbReference type="Gene3D" id="2.120.10.80">
    <property type="entry name" value="Kelch-type beta propeller"/>
    <property type="match status" value="1"/>
</dbReference>
<dbReference type="InterPro" id="IPR036047">
    <property type="entry name" value="F-box-like_dom_sf"/>
</dbReference>
<dbReference type="InterPro" id="IPR001810">
    <property type="entry name" value="F-box_dom"/>
</dbReference>
<dbReference type="InterPro" id="IPR015915">
    <property type="entry name" value="Kelch-typ_b-propeller"/>
</dbReference>
<dbReference type="InterPro" id="IPR006652">
    <property type="entry name" value="Kelch_1"/>
</dbReference>
<dbReference type="InterPro" id="IPR044595">
    <property type="entry name" value="KMD1-4"/>
</dbReference>
<dbReference type="PANTHER" id="PTHR46407:SF21">
    <property type="entry name" value="F-BOX_KELCH-REPEAT PROTEIN SKIP20"/>
    <property type="match status" value="1"/>
</dbReference>
<dbReference type="PANTHER" id="PTHR46407">
    <property type="entry name" value="OS02G0208700 PROTEIN"/>
    <property type="match status" value="1"/>
</dbReference>
<dbReference type="Pfam" id="PF00646">
    <property type="entry name" value="F-box"/>
    <property type="match status" value="1"/>
</dbReference>
<dbReference type="Pfam" id="PF01344">
    <property type="entry name" value="Kelch_1"/>
    <property type="match status" value="1"/>
</dbReference>
<dbReference type="SMART" id="SM00256">
    <property type="entry name" value="FBOX"/>
    <property type="match status" value="1"/>
</dbReference>
<dbReference type="SMART" id="SM00612">
    <property type="entry name" value="Kelch"/>
    <property type="match status" value="2"/>
</dbReference>
<dbReference type="SUPFAM" id="SSF81383">
    <property type="entry name" value="F-box domain"/>
    <property type="match status" value="1"/>
</dbReference>
<dbReference type="SUPFAM" id="SSF117281">
    <property type="entry name" value="Kelch motif"/>
    <property type="match status" value="1"/>
</dbReference>
<reference key="1">
    <citation type="journal article" date="2000" name="Nature">
        <title>Sequence and analysis of chromosome 3 of the plant Arabidopsis thaliana.</title>
        <authorList>
            <person name="Salanoubat M."/>
            <person name="Lemcke K."/>
            <person name="Rieger M."/>
            <person name="Ansorge W."/>
            <person name="Unseld M."/>
            <person name="Fartmann B."/>
            <person name="Valle G."/>
            <person name="Bloecker H."/>
            <person name="Perez-Alonso M."/>
            <person name="Obermaier B."/>
            <person name="Delseny M."/>
            <person name="Boutry M."/>
            <person name="Grivell L.A."/>
            <person name="Mache R."/>
            <person name="Puigdomenech P."/>
            <person name="De Simone V."/>
            <person name="Choisne N."/>
            <person name="Artiguenave F."/>
            <person name="Robert C."/>
            <person name="Brottier P."/>
            <person name="Wincker P."/>
            <person name="Cattolico L."/>
            <person name="Weissenbach J."/>
            <person name="Saurin W."/>
            <person name="Quetier F."/>
            <person name="Schaefer M."/>
            <person name="Mueller-Auer S."/>
            <person name="Gabel C."/>
            <person name="Fuchs M."/>
            <person name="Benes V."/>
            <person name="Wurmbach E."/>
            <person name="Drzonek H."/>
            <person name="Erfle H."/>
            <person name="Jordan N."/>
            <person name="Bangert S."/>
            <person name="Wiedelmann R."/>
            <person name="Kranz H."/>
            <person name="Voss H."/>
            <person name="Holland R."/>
            <person name="Brandt P."/>
            <person name="Nyakatura G."/>
            <person name="Vezzi A."/>
            <person name="D'Angelo M."/>
            <person name="Pallavicini A."/>
            <person name="Toppo S."/>
            <person name="Simionati B."/>
            <person name="Conrad A."/>
            <person name="Hornischer K."/>
            <person name="Kauer G."/>
            <person name="Loehnert T.-H."/>
            <person name="Nordsiek G."/>
            <person name="Reichelt J."/>
            <person name="Scharfe M."/>
            <person name="Schoen O."/>
            <person name="Bargues M."/>
            <person name="Terol J."/>
            <person name="Climent J."/>
            <person name="Navarro P."/>
            <person name="Collado C."/>
            <person name="Perez-Perez A."/>
            <person name="Ottenwaelder B."/>
            <person name="Duchemin D."/>
            <person name="Cooke R."/>
            <person name="Laudie M."/>
            <person name="Berger-Llauro C."/>
            <person name="Purnelle B."/>
            <person name="Masuy D."/>
            <person name="de Haan M."/>
            <person name="Maarse A.C."/>
            <person name="Alcaraz J.-P."/>
            <person name="Cottet A."/>
            <person name="Casacuberta E."/>
            <person name="Monfort A."/>
            <person name="Argiriou A."/>
            <person name="Flores M."/>
            <person name="Liguori R."/>
            <person name="Vitale D."/>
            <person name="Mannhaupt G."/>
            <person name="Haase D."/>
            <person name="Schoof H."/>
            <person name="Rudd S."/>
            <person name="Zaccaria P."/>
            <person name="Mewes H.-W."/>
            <person name="Mayer K.F.X."/>
            <person name="Kaul S."/>
            <person name="Town C.D."/>
            <person name="Koo H.L."/>
            <person name="Tallon L.J."/>
            <person name="Jenkins J."/>
            <person name="Rooney T."/>
            <person name="Rizzo M."/>
            <person name="Walts A."/>
            <person name="Utterback T."/>
            <person name="Fujii C.Y."/>
            <person name="Shea T.P."/>
            <person name="Creasy T.H."/>
            <person name="Haas B."/>
            <person name="Maiti R."/>
            <person name="Wu D."/>
            <person name="Peterson J."/>
            <person name="Van Aken S."/>
            <person name="Pai G."/>
            <person name="Militscher J."/>
            <person name="Sellers P."/>
            <person name="Gill J.E."/>
            <person name="Feldblyum T.V."/>
            <person name="Preuss D."/>
            <person name="Lin X."/>
            <person name="Nierman W.C."/>
            <person name="Salzberg S.L."/>
            <person name="White O."/>
            <person name="Venter J.C."/>
            <person name="Fraser C.M."/>
            <person name="Kaneko T."/>
            <person name="Nakamura Y."/>
            <person name="Sato S."/>
            <person name="Kato T."/>
            <person name="Asamizu E."/>
            <person name="Sasamoto S."/>
            <person name="Kimura T."/>
            <person name="Idesawa K."/>
            <person name="Kawashima K."/>
            <person name="Kishida Y."/>
            <person name="Kiyokawa C."/>
            <person name="Kohara M."/>
            <person name="Matsumoto M."/>
            <person name="Matsuno A."/>
            <person name="Muraki A."/>
            <person name="Nakayama S."/>
            <person name="Nakazaki N."/>
            <person name="Shinpo S."/>
            <person name="Takeuchi C."/>
            <person name="Wada T."/>
            <person name="Watanabe A."/>
            <person name="Yamada M."/>
            <person name="Yasuda M."/>
            <person name="Tabata S."/>
        </authorList>
    </citation>
    <scope>NUCLEOTIDE SEQUENCE [LARGE SCALE GENOMIC DNA]</scope>
    <source>
        <strain>cv. Columbia</strain>
    </source>
</reference>
<reference key="2">
    <citation type="journal article" date="2017" name="Plant J.">
        <title>Araport11: a complete reannotation of the Arabidopsis thaliana reference genome.</title>
        <authorList>
            <person name="Cheng C.Y."/>
            <person name="Krishnakumar V."/>
            <person name="Chan A.P."/>
            <person name="Thibaud-Nissen F."/>
            <person name="Schobel S."/>
            <person name="Town C.D."/>
        </authorList>
    </citation>
    <scope>GENOME REANNOTATION</scope>
    <source>
        <strain>cv. Columbia</strain>
    </source>
</reference>
<reference key="3">
    <citation type="journal article" date="2003" name="Science">
        <title>Empirical analysis of transcriptional activity in the Arabidopsis genome.</title>
        <authorList>
            <person name="Yamada K."/>
            <person name="Lim J."/>
            <person name="Dale J.M."/>
            <person name="Chen H."/>
            <person name="Shinn P."/>
            <person name="Palm C.J."/>
            <person name="Southwick A.M."/>
            <person name="Wu H.C."/>
            <person name="Kim C.J."/>
            <person name="Nguyen M."/>
            <person name="Pham P.K."/>
            <person name="Cheuk R.F."/>
            <person name="Karlin-Newmann G."/>
            <person name="Liu S.X."/>
            <person name="Lam B."/>
            <person name="Sakano H."/>
            <person name="Wu T."/>
            <person name="Yu G."/>
            <person name="Miranda M."/>
            <person name="Quach H.L."/>
            <person name="Tripp M."/>
            <person name="Chang C.H."/>
            <person name="Lee J.M."/>
            <person name="Toriumi M.J."/>
            <person name="Chan M.M."/>
            <person name="Tang C.C."/>
            <person name="Onodera C.S."/>
            <person name="Deng J.M."/>
            <person name="Akiyama K."/>
            <person name="Ansari Y."/>
            <person name="Arakawa T."/>
            <person name="Banh J."/>
            <person name="Banno F."/>
            <person name="Bowser L."/>
            <person name="Brooks S.Y."/>
            <person name="Carninci P."/>
            <person name="Chao Q."/>
            <person name="Choy N."/>
            <person name="Enju A."/>
            <person name="Goldsmith A.D."/>
            <person name="Gurjal M."/>
            <person name="Hansen N.F."/>
            <person name="Hayashizaki Y."/>
            <person name="Johnson-Hopson C."/>
            <person name="Hsuan V.W."/>
            <person name="Iida K."/>
            <person name="Karnes M."/>
            <person name="Khan S."/>
            <person name="Koesema E."/>
            <person name="Ishida J."/>
            <person name="Jiang P.X."/>
            <person name="Jones T."/>
            <person name="Kawai J."/>
            <person name="Kamiya A."/>
            <person name="Meyers C."/>
            <person name="Nakajima M."/>
            <person name="Narusaka M."/>
            <person name="Seki M."/>
            <person name="Sakurai T."/>
            <person name="Satou M."/>
            <person name="Tamse R."/>
            <person name="Vaysberg M."/>
            <person name="Wallender E.K."/>
            <person name="Wong C."/>
            <person name="Yamamura Y."/>
            <person name="Yuan S."/>
            <person name="Shinozaki K."/>
            <person name="Davis R.W."/>
            <person name="Theologis A."/>
            <person name="Ecker J.R."/>
        </authorList>
    </citation>
    <scope>NUCLEOTIDE SEQUENCE [LARGE SCALE MRNA]</scope>
    <source>
        <strain>cv. Columbia</strain>
    </source>
</reference>
<reference key="4">
    <citation type="submission" date="2002-03" db="EMBL/GenBank/DDBJ databases">
        <title>Full-length cDNA from Arabidopsis thaliana.</title>
        <authorList>
            <person name="Brover V.V."/>
            <person name="Troukhan M.E."/>
            <person name="Alexandrov N.A."/>
            <person name="Lu Y.-P."/>
            <person name="Flavell R.B."/>
            <person name="Feldmann K.A."/>
        </authorList>
    </citation>
    <scope>NUCLEOTIDE SEQUENCE [LARGE SCALE MRNA]</scope>
</reference>
<reference key="5">
    <citation type="journal article" date="2003" name="Plant J.">
        <title>Protein interaction analysis of SCF ubiquitin E3 ligase subunits from Arabidopsis.</title>
        <authorList>
            <person name="Risseeuw E.P."/>
            <person name="Daskalchuk T.E."/>
            <person name="Banks T.W."/>
            <person name="Liu E."/>
            <person name="Cotelesage J."/>
            <person name="Hellmann H."/>
            <person name="Estelle M."/>
            <person name="Somers D.E."/>
            <person name="Crosby W.L."/>
        </authorList>
    </citation>
    <scope>INTERACTION WITH SKP1A/ASK1 AND SPK1B/ASK2</scope>
</reference>
<feature type="chain" id="PRO_0000283236" description="F-box/kelch-repeat protein SKIP20">
    <location>
        <begin position="1"/>
        <end position="418"/>
    </location>
</feature>
<feature type="domain" description="F-box">
    <location>
        <begin position="14"/>
        <end position="61"/>
    </location>
</feature>
<feature type="repeat" description="Kelch 1">
    <location>
        <begin position="104"/>
        <end position="150"/>
    </location>
</feature>
<feature type="repeat" description="Kelch 2">
    <location>
        <begin position="153"/>
        <end position="206"/>
    </location>
</feature>
<feature type="repeat" description="Kelch 3">
    <location>
        <begin position="208"/>
        <end position="255"/>
    </location>
</feature>
<feature type="repeat" description="Kelch 4">
    <location>
        <begin position="258"/>
        <end position="314"/>
    </location>
</feature>
<feature type="region of interest" description="Disordered" evidence="2">
    <location>
        <begin position="79"/>
        <end position="104"/>
    </location>
</feature>
<feature type="sequence conflict" description="In Ref. 4; AAM66106." evidence="4" ref="4">
    <original>A</original>
    <variation>P</variation>
    <location>
        <position position="24"/>
    </location>
</feature>
<feature type="sequence conflict" description="In Ref. 4; AAM66106." evidence="4" ref="4">
    <original>M</original>
    <variation>I</variation>
    <location>
        <position position="84"/>
    </location>
</feature>
<organism>
    <name type="scientific">Arabidopsis thaliana</name>
    <name type="common">Mouse-ear cress</name>
    <dbReference type="NCBI Taxonomy" id="3702"/>
    <lineage>
        <taxon>Eukaryota</taxon>
        <taxon>Viridiplantae</taxon>
        <taxon>Streptophyta</taxon>
        <taxon>Embryophyta</taxon>
        <taxon>Tracheophyta</taxon>
        <taxon>Spermatophyta</taxon>
        <taxon>Magnoliopsida</taxon>
        <taxon>eudicotyledons</taxon>
        <taxon>Gunneridae</taxon>
        <taxon>Pentapetalae</taxon>
        <taxon>rosids</taxon>
        <taxon>malvids</taxon>
        <taxon>Brassicales</taxon>
        <taxon>Brassicaceae</taxon>
        <taxon>Camelineae</taxon>
        <taxon>Arabidopsis</taxon>
    </lineage>
</organism>
<evidence type="ECO:0000250" key="1"/>
<evidence type="ECO:0000256" key="2">
    <source>
        <dbReference type="SAM" id="MobiDB-lite"/>
    </source>
</evidence>
<evidence type="ECO:0000269" key="3">
    <source>
    </source>
</evidence>
<evidence type="ECO:0000305" key="4"/>
<name>SKI20_ARATH</name>
<sequence>MGVSKKKSGEIRGDLIPGLPEELAIECLVRVPFQFHSSIKSVCRSWKCVISSRSFIKERIGFGKAESLLCLVQPLTSPPSPAMMEGGEMSQKKKEEEEGESQMTQQLLQPRITGTPLYGLSVYNATLDTWHRVAIPERIPLFCECVAIQDAGKVLLIGGWDPETLQPVRDVFVLDFFAGEGSGRRFRRGRPMSAARSFFACASVGSTKVYVAGGHDDQKNALRSAEVYDVEKDEWSMLPPMTEGRDECHGFSMATDPGFCVLSGYGTETQGQFRSDGEIYDPITNSWSTIENVWPFPDLSPRGRTAAAAAEFPGDFRGCRLWCFIDSERQSQPHWEVEDDSMKWKVIMDTIRLPVTTMTSVFAGSLSGQAVAMIGGGGEESGTMMVKTTAEKNGGKWSHVNTPSGFSSLPFSCSSIYV</sequence>
<keyword id="KW-0880">Kelch repeat</keyword>
<keyword id="KW-0539">Nucleus</keyword>
<keyword id="KW-1185">Reference proteome</keyword>
<keyword id="KW-0677">Repeat</keyword>
<keyword id="KW-0833">Ubl conjugation pathway</keyword>
<comment type="function">
    <text evidence="1">Component of SCF(ASK-cullin-F-box) E3 ubiquitin ligase complexes, which may mediate the ubiquitination and subsequent proteasomal degradation of target proteins.</text>
</comment>
<comment type="pathway">
    <text>Protein modification; protein ubiquitination.</text>
</comment>
<comment type="subunit">
    <text evidence="1 3">Part of a SCF (ASK-cullin-F-box) protein ligase complex (By similarity). Interacts with SKP1A/ASK1 and SPK1B/ASK2.</text>
</comment>
<comment type="subcellular location">
    <subcellularLocation>
        <location evidence="1">Nucleus</location>
    </subcellularLocation>
</comment>
<comment type="domain">
    <text evidence="1">The F-box is necessary for the interaction with ASK proteins.</text>
</comment>
<accession>Q9M1Y1</accession>
<accession>Q8L991</accession>
<proteinExistence type="evidence at protein level"/>
<protein>
    <recommendedName>
        <fullName>F-box/kelch-repeat protein SKIP20</fullName>
    </recommendedName>
    <alternativeName>
        <fullName>SKP1-interacting partner 20</fullName>
    </alternativeName>
</protein>
<gene>
    <name type="primary">SKIP20</name>
    <name type="ordered locus">At3g59940</name>
    <name type="ORF">F24G16.210</name>
</gene>